<keyword id="KW-0025">Alternative splicing</keyword>
<keyword id="KW-0067">ATP-binding</keyword>
<keyword id="KW-0324">Glycolysis</keyword>
<keyword id="KW-0418">Kinase</keyword>
<keyword id="KW-0460">Magnesium</keyword>
<keyword id="KW-0479">Metal-binding</keyword>
<keyword id="KW-0547">Nucleotide-binding</keyword>
<keyword id="KW-0630">Potassium</keyword>
<keyword id="KW-0670">Pyruvate</keyword>
<keyword id="KW-1185">Reference proteome</keyword>
<keyword id="KW-0808">Transferase</keyword>
<evidence type="ECO:0000250" key="1"/>
<evidence type="ECO:0000250" key="2">
    <source>
        <dbReference type="UniProtKB" id="P14618"/>
    </source>
</evidence>
<evidence type="ECO:0000269" key="3">
    <source>
    </source>
</evidence>
<evidence type="ECO:0000269" key="4">
    <source>
    </source>
</evidence>
<evidence type="ECO:0000303" key="5">
    <source>
    </source>
</evidence>
<evidence type="ECO:0000305" key="6"/>
<evidence type="ECO:0000305" key="7">
    <source>
    </source>
</evidence>
<evidence type="ECO:0000312" key="8">
    <source>
        <dbReference type="FlyBase" id="FBgn0267385"/>
    </source>
</evidence>
<evidence type="ECO:0000312" key="9">
    <source>
        <dbReference type="Proteomes" id="UP000000803"/>
    </source>
</evidence>
<proteinExistence type="evidence at transcript level"/>
<sequence length="533" mass="57440">MVNVTIYDEAPQLKPNEVPQNMAAGADTQLEHMCRLQFDSPVPHVRLSGIVCTIGPASSSVEMLEKMMATGMNIARMNFSHGSHEYHAATVANVRQAVKNYSAKLGYEHPVAIALDTKGPEIRTGLIGGSGTAEIELKKGEKIKLTTNKEFLEKGSLEIVYVDYENIVNVVKPGNRVFVDDGLISLIVREVGKDSLTCEVENGGSLGSRKGVNLPGVPVDLPAVSEKDKSDLLFGVEQEVDMIFASFIRNAAALTEIRKVLGEKGKNIKIISKIENQQGMHNLDEIIEAGDGIMVARGDLGIEIPAEKVFLAQKAMIARCNKAGKPVICATQMLESMVKKPRPTRAEISDVANAVLDGADCVMLSGETAKGEYPLECVLTMAKTCKEAEAALWHQNLFNDLVRGAGTIDASHAAAIAAVEAATKAKASAIVVITTSGKSAFQVSKYRPRCPIIAVTRFAQTARQAHLYRGLVPLIYKEPGLGDWLKDVDVRVQFGLQVGKKNGFIKTGDSVVVVTGWKQGSGFTNTIRIVTVE</sequence>
<organism evidence="9">
    <name type="scientific">Drosophila melanogaster</name>
    <name type="common">Fruit fly</name>
    <dbReference type="NCBI Taxonomy" id="7227"/>
    <lineage>
        <taxon>Eukaryota</taxon>
        <taxon>Metazoa</taxon>
        <taxon>Ecdysozoa</taxon>
        <taxon>Arthropoda</taxon>
        <taxon>Hexapoda</taxon>
        <taxon>Insecta</taxon>
        <taxon>Pterygota</taxon>
        <taxon>Neoptera</taxon>
        <taxon>Endopterygota</taxon>
        <taxon>Diptera</taxon>
        <taxon>Brachycera</taxon>
        <taxon>Muscomorpha</taxon>
        <taxon>Ephydroidea</taxon>
        <taxon>Drosophilidae</taxon>
        <taxon>Drosophila</taxon>
        <taxon>Sophophora</taxon>
    </lineage>
</organism>
<comment type="function">
    <text evidence="3 7">Enzyme of the glycolytic pathway (Probable). Glycolysis is essential in glial cells but not in neurons; neurons rely on the citric acid cycle for their energy needs, and on lactate and alanine secreted into the hemolymph by glial cells to fuel it (PubMed:26235423).</text>
</comment>
<comment type="catalytic activity">
    <reaction>
        <text>pyruvate + ATP = phosphoenolpyruvate + ADP + H(+)</text>
        <dbReference type="Rhea" id="RHEA:18157"/>
        <dbReference type="ChEBI" id="CHEBI:15361"/>
        <dbReference type="ChEBI" id="CHEBI:15378"/>
        <dbReference type="ChEBI" id="CHEBI:30616"/>
        <dbReference type="ChEBI" id="CHEBI:58702"/>
        <dbReference type="ChEBI" id="CHEBI:456216"/>
        <dbReference type="EC" id="2.7.1.40"/>
    </reaction>
</comment>
<comment type="cofactor">
    <cofactor>
        <name>Mg(2+)</name>
        <dbReference type="ChEBI" id="CHEBI:18420"/>
    </cofactor>
</comment>
<comment type="cofactor">
    <cofactor>
        <name>K(+)</name>
        <dbReference type="ChEBI" id="CHEBI:29103"/>
    </cofactor>
</comment>
<comment type="pathway">
    <text>Carbohydrate degradation; glycolysis; pyruvate from D-glyceraldehyde 3-phosphate: step 5/5.</text>
</comment>
<comment type="subunit">
    <text evidence="1">Homotetramer.</text>
</comment>
<comment type="alternative products">
    <event type="alternative splicing"/>
    <isoform>
        <id>O62619-1</id>
        <name>A</name>
        <sequence type="displayed"/>
    </isoform>
    <isoform>
        <id>O62619-2</id>
        <name>B</name>
        <sequence type="described" ref="VSP_002885"/>
    </isoform>
</comment>
<comment type="tissue specificity">
    <text evidence="4">In adults expressed predominantly in the thorax.</text>
</comment>
<comment type="developmental stage">
    <text evidence="4">Low levels in larvae and pupae, but increases in young adults, becoming relatively stable in two-day-old flies.</text>
</comment>
<comment type="disruption phenotype">
    <text evidence="3">RNAi-mediated knockdown is lethal (PubMed:26235423). Glial-specific RNAi-mediated knockdown is lethal (PubMed:26235423). Neuronal-specific RNAi-mediated knockdown is viable with no defects (PubMed:26235423).</text>
</comment>
<comment type="similarity">
    <text evidence="6">Belongs to the pyruvate kinase family.</text>
</comment>
<feature type="chain" id="PRO_0000112099" description="Pyruvate kinase">
    <location>
        <begin position="1"/>
        <end position="533"/>
    </location>
</feature>
<feature type="binding site" evidence="1">
    <location>
        <position position="76"/>
    </location>
    <ligand>
        <name>substrate</name>
    </ligand>
</feature>
<feature type="binding site" evidence="2">
    <location>
        <begin position="78"/>
        <end position="81"/>
    </location>
    <ligand>
        <name>ATP</name>
        <dbReference type="ChEBI" id="CHEBI:30616"/>
    </ligand>
</feature>
<feature type="binding site" evidence="1">
    <location>
        <position position="78"/>
    </location>
    <ligand>
        <name>K(+)</name>
        <dbReference type="ChEBI" id="CHEBI:29103"/>
    </ligand>
</feature>
<feature type="binding site" evidence="1">
    <location>
        <position position="80"/>
    </location>
    <ligand>
        <name>K(+)</name>
        <dbReference type="ChEBI" id="CHEBI:29103"/>
    </ligand>
</feature>
<feature type="binding site" evidence="1">
    <location>
        <position position="116"/>
    </location>
    <ligand>
        <name>K(+)</name>
        <dbReference type="ChEBI" id="CHEBI:29103"/>
    </ligand>
</feature>
<feature type="binding site" evidence="1">
    <location>
        <position position="117"/>
    </location>
    <ligand>
        <name>K(+)</name>
        <dbReference type="ChEBI" id="CHEBI:29103"/>
    </ligand>
</feature>
<feature type="binding site" evidence="2">
    <location>
        <position position="123"/>
    </location>
    <ligand>
        <name>ATP</name>
        <dbReference type="ChEBI" id="CHEBI:30616"/>
    </ligand>
</feature>
<feature type="binding site" evidence="2">
    <location>
        <position position="210"/>
    </location>
    <ligand>
        <name>ATP</name>
        <dbReference type="ChEBI" id="CHEBI:30616"/>
    </ligand>
</feature>
<feature type="binding site" evidence="1">
    <location>
        <position position="275"/>
    </location>
    <ligand>
        <name>Mg(2+)</name>
        <dbReference type="ChEBI" id="CHEBI:18420"/>
    </ligand>
</feature>
<feature type="binding site" evidence="1">
    <location>
        <position position="298"/>
    </location>
    <ligand>
        <name>substrate</name>
    </ligand>
</feature>
<feature type="binding site" evidence="1">
    <location>
        <position position="299"/>
    </location>
    <ligand>
        <name>Mg(2+)</name>
        <dbReference type="ChEBI" id="CHEBI:18420"/>
    </ligand>
</feature>
<feature type="binding site" evidence="1">
    <location>
        <position position="299"/>
    </location>
    <ligand>
        <name>substrate</name>
    </ligand>
</feature>
<feature type="binding site" evidence="1">
    <location>
        <position position="331"/>
    </location>
    <ligand>
        <name>substrate</name>
    </ligand>
</feature>
<feature type="site" description="Transition state stabilizer" evidence="1">
    <location>
        <position position="273"/>
    </location>
</feature>
<feature type="splice variant" id="VSP_002885" description="In isoform B." evidence="5">
    <location>
        <begin position="1"/>
        <end position="21"/>
    </location>
</feature>
<feature type="sequence conflict" description="In Ref. 1; AAC16244/AAC15808." evidence="6" ref="1">
    <original>D</original>
    <variation>N</variation>
    <location>
        <position position="180"/>
    </location>
</feature>
<feature type="sequence conflict" description="In Ref. 4; AAO24935." evidence="6" ref="4">
    <original>I</original>
    <variation>F</variation>
    <location>
        <position position="271"/>
    </location>
</feature>
<feature type="sequence conflict" description="In Ref. 1; AAC16244/AAC15808." evidence="6" ref="1">
    <original>L</original>
    <variation>F</variation>
    <location>
        <position position="397"/>
    </location>
</feature>
<reference key="1">
    <citation type="journal article" date="1999" name="Zool. Stud.">
        <title>Complementary DNA cloning and analysis of gene structure of pyruvate kinase from Drosophila melanogaster.</title>
        <authorList>
            <person name="Chien Y.-C."/>
            <person name="Zhu Y.-J."/>
            <person name="Chuen C.-M."/>
        </authorList>
    </citation>
    <scope>NUCLEOTIDE SEQUENCE [GENOMIC DNA / MRNA] (ISOFORM A)</scope>
    <source>
        <strain>Canton-S</strain>
    </source>
</reference>
<reference key="2">
    <citation type="journal article" date="2000" name="Science">
        <title>The genome sequence of Drosophila melanogaster.</title>
        <authorList>
            <person name="Adams M.D."/>
            <person name="Celniker S.E."/>
            <person name="Holt R.A."/>
            <person name="Evans C.A."/>
            <person name="Gocayne J.D."/>
            <person name="Amanatides P.G."/>
            <person name="Scherer S.E."/>
            <person name="Li P.W."/>
            <person name="Hoskins R.A."/>
            <person name="Galle R.F."/>
            <person name="George R.A."/>
            <person name="Lewis S.E."/>
            <person name="Richards S."/>
            <person name="Ashburner M."/>
            <person name="Henderson S.N."/>
            <person name="Sutton G.G."/>
            <person name="Wortman J.R."/>
            <person name="Yandell M.D."/>
            <person name="Zhang Q."/>
            <person name="Chen L.X."/>
            <person name="Brandon R.C."/>
            <person name="Rogers Y.-H.C."/>
            <person name="Blazej R.G."/>
            <person name="Champe M."/>
            <person name="Pfeiffer B.D."/>
            <person name="Wan K.H."/>
            <person name="Doyle C."/>
            <person name="Baxter E.G."/>
            <person name="Helt G."/>
            <person name="Nelson C.R."/>
            <person name="Miklos G.L.G."/>
            <person name="Abril J.F."/>
            <person name="Agbayani A."/>
            <person name="An H.-J."/>
            <person name="Andrews-Pfannkoch C."/>
            <person name="Baldwin D."/>
            <person name="Ballew R.M."/>
            <person name="Basu A."/>
            <person name="Baxendale J."/>
            <person name="Bayraktaroglu L."/>
            <person name="Beasley E.M."/>
            <person name="Beeson K.Y."/>
            <person name="Benos P.V."/>
            <person name="Berman B.P."/>
            <person name="Bhandari D."/>
            <person name="Bolshakov S."/>
            <person name="Borkova D."/>
            <person name="Botchan M.R."/>
            <person name="Bouck J."/>
            <person name="Brokstein P."/>
            <person name="Brottier P."/>
            <person name="Burtis K.C."/>
            <person name="Busam D.A."/>
            <person name="Butler H."/>
            <person name="Cadieu E."/>
            <person name="Center A."/>
            <person name="Chandra I."/>
            <person name="Cherry J.M."/>
            <person name="Cawley S."/>
            <person name="Dahlke C."/>
            <person name="Davenport L.B."/>
            <person name="Davies P."/>
            <person name="de Pablos B."/>
            <person name="Delcher A."/>
            <person name="Deng Z."/>
            <person name="Mays A.D."/>
            <person name="Dew I."/>
            <person name="Dietz S.M."/>
            <person name="Dodson K."/>
            <person name="Doup L.E."/>
            <person name="Downes M."/>
            <person name="Dugan-Rocha S."/>
            <person name="Dunkov B.C."/>
            <person name="Dunn P."/>
            <person name="Durbin K.J."/>
            <person name="Evangelista C.C."/>
            <person name="Ferraz C."/>
            <person name="Ferriera S."/>
            <person name="Fleischmann W."/>
            <person name="Fosler C."/>
            <person name="Gabrielian A.E."/>
            <person name="Garg N.S."/>
            <person name="Gelbart W.M."/>
            <person name="Glasser K."/>
            <person name="Glodek A."/>
            <person name="Gong F."/>
            <person name="Gorrell J.H."/>
            <person name="Gu Z."/>
            <person name="Guan P."/>
            <person name="Harris M."/>
            <person name="Harris N.L."/>
            <person name="Harvey D.A."/>
            <person name="Heiman T.J."/>
            <person name="Hernandez J.R."/>
            <person name="Houck J."/>
            <person name="Hostin D."/>
            <person name="Houston K.A."/>
            <person name="Howland T.J."/>
            <person name="Wei M.-H."/>
            <person name="Ibegwam C."/>
            <person name="Jalali M."/>
            <person name="Kalush F."/>
            <person name="Karpen G.H."/>
            <person name="Ke Z."/>
            <person name="Kennison J.A."/>
            <person name="Ketchum K.A."/>
            <person name="Kimmel B.E."/>
            <person name="Kodira C.D."/>
            <person name="Kraft C.L."/>
            <person name="Kravitz S."/>
            <person name="Kulp D."/>
            <person name="Lai Z."/>
            <person name="Lasko P."/>
            <person name="Lei Y."/>
            <person name="Levitsky A.A."/>
            <person name="Li J.H."/>
            <person name="Li Z."/>
            <person name="Liang Y."/>
            <person name="Lin X."/>
            <person name="Liu X."/>
            <person name="Mattei B."/>
            <person name="McIntosh T.C."/>
            <person name="McLeod M.P."/>
            <person name="McPherson D."/>
            <person name="Merkulov G."/>
            <person name="Milshina N.V."/>
            <person name="Mobarry C."/>
            <person name="Morris J."/>
            <person name="Moshrefi A."/>
            <person name="Mount S.M."/>
            <person name="Moy M."/>
            <person name="Murphy B."/>
            <person name="Murphy L."/>
            <person name="Muzny D.M."/>
            <person name="Nelson D.L."/>
            <person name="Nelson D.R."/>
            <person name="Nelson K.A."/>
            <person name="Nixon K."/>
            <person name="Nusskern D.R."/>
            <person name="Pacleb J.M."/>
            <person name="Palazzolo M."/>
            <person name="Pittman G.S."/>
            <person name="Pan S."/>
            <person name="Pollard J."/>
            <person name="Puri V."/>
            <person name="Reese M.G."/>
            <person name="Reinert K."/>
            <person name="Remington K."/>
            <person name="Saunders R.D.C."/>
            <person name="Scheeler F."/>
            <person name="Shen H."/>
            <person name="Shue B.C."/>
            <person name="Siden-Kiamos I."/>
            <person name="Simpson M."/>
            <person name="Skupski M.P."/>
            <person name="Smith T.J."/>
            <person name="Spier E."/>
            <person name="Spradling A.C."/>
            <person name="Stapleton M."/>
            <person name="Strong R."/>
            <person name="Sun E."/>
            <person name="Svirskas R."/>
            <person name="Tector C."/>
            <person name="Turner R."/>
            <person name="Venter E."/>
            <person name="Wang A.H."/>
            <person name="Wang X."/>
            <person name="Wang Z.-Y."/>
            <person name="Wassarman D.A."/>
            <person name="Weinstock G.M."/>
            <person name="Weissenbach J."/>
            <person name="Williams S.M."/>
            <person name="Woodage T."/>
            <person name="Worley K.C."/>
            <person name="Wu D."/>
            <person name="Yang S."/>
            <person name="Yao Q.A."/>
            <person name="Ye J."/>
            <person name="Yeh R.-F."/>
            <person name="Zaveri J.S."/>
            <person name="Zhan M."/>
            <person name="Zhang G."/>
            <person name="Zhao Q."/>
            <person name="Zheng L."/>
            <person name="Zheng X.H."/>
            <person name="Zhong F.N."/>
            <person name="Zhong W."/>
            <person name="Zhou X."/>
            <person name="Zhu S.C."/>
            <person name="Zhu X."/>
            <person name="Smith H.O."/>
            <person name="Gibbs R.A."/>
            <person name="Myers E.W."/>
            <person name="Rubin G.M."/>
            <person name="Venter J.C."/>
        </authorList>
    </citation>
    <scope>NUCLEOTIDE SEQUENCE [LARGE SCALE GENOMIC DNA]</scope>
    <source>
        <strain>Berkeley</strain>
    </source>
</reference>
<reference key="3">
    <citation type="journal article" date="2002" name="Genome Biol.">
        <title>Annotation of the Drosophila melanogaster euchromatic genome: a systematic review.</title>
        <authorList>
            <person name="Misra S."/>
            <person name="Crosby M.A."/>
            <person name="Mungall C.J."/>
            <person name="Matthews B.B."/>
            <person name="Campbell K.S."/>
            <person name="Hradecky P."/>
            <person name="Huang Y."/>
            <person name="Kaminker J.S."/>
            <person name="Millburn G.H."/>
            <person name="Prochnik S.E."/>
            <person name="Smith C.D."/>
            <person name="Tupy J.L."/>
            <person name="Whitfield E.J."/>
            <person name="Bayraktaroglu L."/>
            <person name="Berman B.P."/>
            <person name="Bettencourt B.R."/>
            <person name="Celniker S.E."/>
            <person name="de Grey A.D.N.J."/>
            <person name="Drysdale R.A."/>
            <person name="Harris N.L."/>
            <person name="Richter J."/>
            <person name="Russo S."/>
            <person name="Schroeder A.J."/>
            <person name="Shu S.Q."/>
            <person name="Stapleton M."/>
            <person name="Yamada C."/>
            <person name="Ashburner M."/>
            <person name="Gelbart W.M."/>
            <person name="Rubin G.M."/>
            <person name="Lewis S.E."/>
        </authorList>
    </citation>
    <scope>GENOME REANNOTATION</scope>
    <scope>ALTERNATIVE SPLICING</scope>
    <source>
        <strain>Berkeley</strain>
    </source>
</reference>
<reference key="4">
    <citation type="journal article" date="2002" name="Genome Biol.">
        <title>A Drosophila full-length cDNA resource.</title>
        <authorList>
            <person name="Stapleton M."/>
            <person name="Carlson J.W."/>
            <person name="Brokstein P."/>
            <person name="Yu C."/>
            <person name="Champe M."/>
            <person name="George R.A."/>
            <person name="Guarin H."/>
            <person name="Kronmiller B."/>
            <person name="Pacleb J.M."/>
            <person name="Park S."/>
            <person name="Wan K.H."/>
            <person name="Rubin G.M."/>
            <person name="Celniker S.E."/>
        </authorList>
    </citation>
    <scope>NUCLEOTIDE SEQUENCE [LARGE SCALE MRNA] (ISOFORMS A AND B)</scope>
    <source>
        <strain>Berkeley</strain>
        <tissue>Embryo</tissue>
        <tissue>Head</tissue>
    </source>
</reference>
<reference key="5">
    <citation type="submission" date="2009-04" db="EMBL/GenBank/DDBJ databases">
        <authorList>
            <person name="Carlson J.W."/>
            <person name="Booth B."/>
            <person name="Frise E."/>
            <person name="Park S."/>
            <person name="Wan K.H."/>
            <person name="Yu C."/>
            <person name="Celniker S.E."/>
        </authorList>
    </citation>
    <scope>NUCLEOTIDE SEQUENCE [LARGE SCALE MRNA] (ISOFORM A)</scope>
    <source>
        <strain>Berkeley</strain>
    </source>
</reference>
<reference key="6">
    <citation type="journal article" date="1985" name="J. Hered.">
        <title>Localization of a dosage sensitive region for pyruvate kinase in Drosophila melanogaster.</title>
        <authorList>
            <person name="Rust K.J."/>
            <person name="Collier G.E."/>
        </authorList>
    </citation>
    <scope>TISSUE SPECIFICITY</scope>
    <scope>DEVELOPMENTAL STAGE</scope>
</reference>
<reference key="7">
    <citation type="journal article" date="2015" name="Cell Metab.">
        <title>Glial Glycolysis Is Essential for Neuronal Survival in Drosophila.</title>
        <authorList>
            <person name="Volkenhoff A."/>
            <person name="Weiler A."/>
            <person name="Letzel M."/>
            <person name="Stehling M."/>
            <person name="Klaembt C."/>
            <person name="Schirmeier S."/>
        </authorList>
    </citation>
    <scope>FUNCTION</scope>
    <scope>DISRUPTION PHENOTYPE</scope>
</reference>
<dbReference type="EC" id="2.7.1.40"/>
<dbReference type="EMBL" id="AF062478">
    <property type="protein sequence ID" value="AAC16244.1"/>
    <property type="molecule type" value="Genomic_DNA"/>
</dbReference>
<dbReference type="EMBL" id="AF061507">
    <property type="protein sequence ID" value="AAC15808.1"/>
    <property type="molecule type" value="mRNA"/>
</dbReference>
<dbReference type="EMBL" id="AE014297">
    <property type="protein sequence ID" value="AAF55979.3"/>
    <property type="molecule type" value="Genomic_DNA"/>
</dbReference>
<dbReference type="EMBL" id="AE014297">
    <property type="protein sequence ID" value="AAN14373.1"/>
    <property type="molecule type" value="Genomic_DNA"/>
</dbReference>
<dbReference type="EMBL" id="AY118442">
    <property type="protein sequence ID" value="AAM48471.1"/>
    <property type="molecule type" value="mRNA"/>
</dbReference>
<dbReference type="EMBL" id="BT003180">
    <property type="protein sequence ID" value="AAO24935.1"/>
    <property type="molecule type" value="mRNA"/>
</dbReference>
<dbReference type="EMBL" id="BT082045">
    <property type="protein sequence ID" value="ACO95723.1"/>
    <property type="molecule type" value="mRNA"/>
</dbReference>
<dbReference type="RefSeq" id="NP_524448.3">
    <molecule id="O62619-1"/>
    <property type="nucleotide sequence ID" value="NM_079724.3"/>
</dbReference>
<dbReference type="RefSeq" id="NP_732723.1">
    <molecule id="O62619-2"/>
    <property type="nucleotide sequence ID" value="NM_170004.2"/>
</dbReference>
<dbReference type="SMR" id="O62619"/>
<dbReference type="BioGRID" id="67578">
    <property type="interactions" value="38"/>
</dbReference>
<dbReference type="DIP" id="DIP-19290N"/>
<dbReference type="FunCoup" id="O62619">
    <property type="interactions" value="659"/>
</dbReference>
<dbReference type="IntAct" id="O62619">
    <property type="interactions" value="23"/>
</dbReference>
<dbReference type="MINT" id="O62619"/>
<dbReference type="STRING" id="7227.FBpp0083611"/>
<dbReference type="GlyGen" id="O62619">
    <property type="glycosylation" value="1 site, 1 O-linked glycan (1 site)"/>
</dbReference>
<dbReference type="PaxDb" id="7227-FBpp0083611"/>
<dbReference type="DNASU" id="42620"/>
<dbReference type="EnsemblMetazoa" id="FBtr0084213">
    <molecule id="O62619-2"/>
    <property type="protein sequence ID" value="FBpp0083610"/>
    <property type="gene ID" value="FBgn0267385"/>
</dbReference>
<dbReference type="EnsemblMetazoa" id="FBtr0084214">
    <molecule id="O62619-1"/>
    <property type="protein sequence ID" value="FBpp0083611"/>
    <property type="gene ID" value="FBgn0267385"/>
</dbReference>
<dbReference type="GeneID" id="42620"/>
<dbReference type="KEGG" id="dme:Dmel_CG7070"/>
<dbReference type="AGR" id="FB:FBgn0267385"/>
<dbReference type="CTD" id="42620"/>
<dbReference type="FlyBase" id="FBgn0267385">
    <property type="gene designation" value="Pyk"/>
</dbReference>
<dbReference type="VEuPathDB" id="VectorBase:FBgn0267385"/>
<dbReference type="eggNOG" id="KOG2323">
    <property type="taxonomic scope" value="Eukaryota"/>
</dbReference>
<dbReference type="GeneTree" id="ENSGT00390000008859"/>
<dbReference type="InParanoid" id="O62619"/>
<dbReference type="OMA" id="RVHHIGE"/>
<dbReference type="OrthoDB" id="108365at2759"/>
<dbReference type="PhylomeDB" id="O62619"/>
<dbReference type="Reactome" id="R-DME-6798695">
    <property type="pathway name" value="Neutrophil degranulation"/>
</dbReference>
<dbReference type="Reactome" id="R-DME-70171">
    <property type="pathway name" value="Glycolysis"/>
</dbReference>
<dbReference type="Reactome" id="R-DME-70268">
    <property type="pathway name" value="Pyruvate metabolism"/>
</dbReference>
<dbReference type="Reactome" id="R-DME-9861718">
    <property type="pathway name" value="Regulation of pyruvate metabolism"/>
</dbReference>
<dbReference type="SignaLink" id="O62619"/>
<dbReference type="UniPathway" id="UPA00109">
    <property type="reaction ID" value="UER00188"/>
</dbReference>
<dbReference type="BioGRID-ORCS" id="42620">
    <property type="hits" value="1 hit in 3 CRISPR screens"/>
</dbReference>
<dbReference type="ChiTaRS" id="PyK">
    <property type="organism name" value="fly"/>
</dbReference>
<dbReference type="GenomeRNAi" id="42620"/>
<dbReference type="PRO" id="PR:O62619"/>
<dbReference type="Proteomes" id="UP000000803">
    <property type="component" value="Chromosome 3R"/>
</dbReference>
<dbReference type="Bgee" id="FBgn0267385">
    <property type="expression patterns" value="Expressed in thoracico-abdominal ganglion (Drosophila) and 282 other cell types or tissues"/>
</dbReference>
<dbReference type="GO" id="GO:0005737">
    <property type="term" value="C:cytoplasm"/>
    <property type="evidence" value="ECO:0000318"/>
    <property type="project" value="GO_Central"/>
</dbReference>
<dbReference type="GO" id="GO:0005829">
    <property type="term" value="C:cytosol"/>
    <property type="evidence" value="ECO:0000314"/>
    <property type="project" value="FlyBase"/>
</dbReference>
<dbReference type="GO" id="GO:0005739">
    <property type="term" value="C:mitochondrion"/>
    <property type="evidence" value="ECO:0000250"/>
    <property type="project" value="FlyBase"/>
</dbReference>
<dbReference type="GO" id="GO:0043186">
    <property type="term" value="C:P granule"/>
    <property type="evidence" value="ECO:0000353"/>
    <property type="project" value="FlyBase"/>
</dbReference>
<dbReference type="GO" id="GO:0005524">
    <property type="term" value="F:ATP binding"/>
    <property type="evidence" value="ECO:0007669"/>
    <property type="project" value="UniProtKB-KW"/>
</dbReference>
<dbReference type="GO" id="GO:0016301">
    <property type="term" value="F:kinase activity"/>
    <property type="evidence" value="ECO:0007669"/>
    <property type="project" value="UniProtKB-KW"/>
</dbReference>
<dbReference type="GO" id="GO:0000287">
    <property type="term" value="F:magnesium ion binding"/>
    <property type="evidence" value="ECO:0007669"/>
    <property type="project" value="InterPro"/>
</dbReference>
<dbReference type="GO" id="GO:0030955">
    <property type="term" value="F:potassium ion binding"/>
    <property type="evidence" value="ECO:0007669"/>
    <property type="project" value="InterPro"/>
</dbReference>
<dbReference type="GO" id="GO:0004743">
    <property type="term" value="F:pyruvate kinase activity"/>
    <property type="evidence" value="ECO:0000314"/>
    <property type="project" value="FlyBase"/>
</dbReference>
<dbReference type="GO" id="GO:0061621">
    <property type="term" value="P:canonical glycolysis"/>
    <property type="evidence" value="ECO:0000315"/>
    <property type="project" value="FlyBase"/>
</dbReference>
<dbReference type="GO" id="GO:0042593">
    <property type="term" value="P:glucose homeostasis"/>
    <property type="evidence" value="ECO:0000315"/>
    <property type="project" value="FlyBase"/>
</dbReference>
<dbReference type="GO" id="GO:0006096">
    <property type="term" value="P:glycolytic process"/>
    <property type="evidence" value="ECO:0000250"/>
    <property type="project" value="FlyBase"/>
</dbReference>
<dbReference type="GO" id="GO:0042866">
    <property type="term" value="P:pyruvate biosynthetic process"/>
    <property type="evidence" value="ECO:0000315"/>
    <property type="project" value="FlyBase"/>
</dbReference>
<dbReference type="GO" id="GO:0006090">
    <property type="term" value="P:pyruvate metabolic process"/>
    <property type="evidence" value="ECO:0000250"/>
    <property type="project" value="FlyBase"/>
</dbReference>
<dbReference type="GO" id="GO:0009744">
    <property type="term" value="P:response to sucrose"/>
    <property type="evidence" value="ECO:0000315"/>
    <property type="project" value="FlyBase"/>
</dbReference>
<dbReference type="CDD" id="cd00288">
    <property type="entry name" value="Pyruvate_Kinase"/>
    <property type="match status" value="1"/>
</dbReference>
<dbReference type="FunFam" id="3.20.20.60:FF:000025">
    <property type="entry name" value="Pyruvate kinase"/>
    <property type="match status" value="1"/>
</dbReference>
<dbReference type="FunFam" id="3.40.1380.20:FF:000001">
    <property type="entry name" value="Pyruvate kinase"/>
    <property type="match status" value="1"/>
</dbReference>
<dbReference type="FunFam" id="2.40.33.10:FF:000023">
    <property type="entry name" value="Pyruvate kinase PKM"/>
    <property type="match status" value="1"/>
</dbReference>
<dbReference type="Gene3D" id="3.20.20.60">
    <property type="entry name" value="Phosphoenolpyruvate-binding domains"/>
    <property type="match status" value="1"/>
</dbReference>
<dbReference type="Gene3D" id="2.40.33.10">
    <property type="entry name" value="PK beta-barrel domain-like"/>
    <property type="match status" value="1"/>
</dbReference>
<dbReference type="Gene3D" id="3.40.1380.20">
    <property type="entry name" value="Pyruvate kinase, C-terminal domain"/>
    <property type="match status" value="1"/>
</dbReference>
<dbReference type="InterPro" id="IPR001697">
    <property type="entry name" value="Pyr_Knase"/>
</dbReference>
<dbReference type="InterPro" id="IPR015813">
    <property type="entry name" value="Pyrv/PenolPyrv_kinase-like_dom"/>
</dbReference>
<dbReference type="InterPro" id="IPR040442">
    <property type="entry name" value="Pyrv_kinase-like_dom_sf"/>
</dbReference>
<dbReference type="InterPro" id="IPR011037">
    <property type="entry name" value="Pyrv_Knase-like_insert_dom_sf"/>
</dbReference>
<dbReference type="InterPro" id="IPR018209">
    <property type="entry name" value="Pyrv_Knase_AS"/>
</dbReference>
<dbReference type="InterPro" id="IPR015793">
    <property type="entry name" value="Pyrv_Knase_brl"/>
</dbReference>
<dbReference type="InterPro" id="IPR015795">
    <property type="entry name" value="Pyrv_Knase_C"/>
</dbReference>
<dbReference type="InterPro" id="IPR036918">
    <property type="entry name" value="Pyrv_Knase_C_sf"/>
</dbReference>
<dbReference type="InterPro" id="IPR015806">
    <property type="entry name" value="Pyrv_Knase_insert_dom_sf"/>
</dbReference>
<dbReference type="NCBIfam" id="NF004491">
    <property type="entry name" value="PRK05826.1"/>
    <property type="match status" value="1"/>
</dbReference>
<dbReference type="NCBIfam" id="NF004978">
    <property type="entry name" value="PRK06354.1"/>
    <property type="match status" value="1"/>
</dbReference>
<dbReference type="NCBIfam" id="TIGR01064">
    <property type="entry name" value="pyruv_kin"/>
    <property type="match status" value="1"/>
</dbReference>
<dbReference type="PANTHER" id="PTHR11817">
    <property type="entry name" value="PYRUVATE KINASE"/>
    <property type="match status" value="1"/>
</dbReference>
<dbReference type="Pfam" id="PF00224">
    <property type="entry name" value="PK"/>
    <property type="match status" value="1"/>
</dbReference>
<dbReference type="Pfam" id="PF02887">
    <property type="entry name" value="PK_C"/>
    <property type="match status" value="1"/>
</dbReference>
<dbReference type="PRINTS" id="PR01050">
    <property type="entry name" value="PYRUVTKNASE"/>
</dbReference>
<dbReference type="SUPFAM" id="SSF51621">
    <property type="entry name" value="Phosphoenolpyruvate/pyruvate domain"/>
    <property type="match status" value="1"/>
</dbReference>
<dbReference type="SUPFAM" id="SSF50800">
    <property type="entry name" value="PK beta-barrel domain-like"/>
    <property type="match status" value="1"/>
</dbReference>
<dbReference type="SUPFAM" id="SSF52935">
    <property type="entry name" value="PK C-terminal domain-like"/>
    <property type="match status" value="1"/>
</dbReference>
<dbReference type="PROSITE" id="PS00110">
    <property type="entry name" value="PYRUVATE_KINASE"/>
    <property type="match status" value="1"/>
</dbReference>
<name>KPYK_DROME</name>
<accession>O62619</accession>
<accession>C3KGI0</accession>
<accession>Q86PE3</accession>
<accession>Q8MT14</accession>
<accession>Q9VD24</accession>
<protein>
    <recommendedName>
        <fullName evidence="8">Pyruvate kinase</fullName>
        <shortName>PK</shortName>
        <ecNumber>2.7.1.40</ecNumber>
    </recommendedName>
</protein>
<gene>
    <name evidence="8" type="primary">Pyk</name>
    <name evidence="8" type="ORF">CG7070</name>
</gene>